<dbReference type="EC" id="2.7.1.148" evidence="1"/>
<dbReference type="EMBL" id="CP000435">
    <property type="protein sequence ID" value="ABI47759.1"/>
    <property type="molecule type" value="Genomic_DNA"/>
</dbReference>
<dbReference type="RefSeq" id="WP_011619515.1">
    <property type="nucleotide sequence ID" value="NC_008319.1"/>
</dbReference>
<dbReference type="SMR" id="Q0I9S4"/>
<dbReference type="STRING" id="64471.sync_1593"/>
<dbReference type="KEGG" id="syg:sync_1593"/>
<dbReference type="eggNOG" id="COG1947">
    <property type="taxonomic scope" value="Bacteria"/>
</dbReference>
<dbReference type="HOGENOM" id="CLU_053057_1_1_3"/>
<dbReference type="OrthoDB" id="9809438at2"/>
<dbReference type="UniPathway" id="UPA00056">
    <property type="reaction ID" value="UER00094"/>
</dbReference>
<dbReference type="Proteomes" id="UP000001961">
    <property type="component" value="Chromosome"/>
</dbReference>
<dbReference type="GO" id="GO:0050515">
    <property type="term" value="F:4-(cytidine 5'-diphospho)-2-C-methyl-D-erythritol kinase activity"/>
    <property type="evidence" value="ECO:0007669"/>
    <property type="project" value="UniProtKB-UniRule"/>
</dbReference>
<dbReference type="GO" id="GO:0005524">
    <property type="term" value="F:ATP binding"/>
    <property type="evidence" value="ECO:0007669"/>
    <property type="project" value="UniProtKB-UniRule"/>
</dbReference>
<dbReference type="GO" id="GO:0019288">
    <property type="term" value="P:isopentenyl diphosphate biosynthetic process, methylerythritol 4-phosphate pathway"/>
    <property type="evidence" value="ECO:0007669"/>
    <property type="project" value="UniProtKB-UniRule"/>
</dbReference>
<dbReference type="GO" id="GO:0016114">
    <property type="term" value="P:terpenoid biosynthetic process"/>
    <property type="evidence" value="ECO:0007669"/>
    <property type="project" value="InterPro"/>
</dbReference>
<dbReference type="Gene3D" id="3.30.230.10">
    <property type="match status" value="1"/>
</dbReference>
<dbReference type="Gene3D" id="3.30.70.890">
    <property type="entry name" value="GHMP kinase, C-terminal domain"/>
    <property type="match status" value="1"/>
</dbReference>
<dbReference type="HAMAP" id="MF_00061">
    <property type="entry name" value="IspE"/>
    <property type="match status" value="1"/>
</dbReference>
<dbReference type="InterPro" id="IPR013750">
    <property type="entry name" value="GHMP_kinase_C_dom"/>
</dbReference>
<dbReference type="InterPro" id="IPR036554">
    <property type="entry name" value="GHMP_kinase_C_sf"/>
</dbReference>
<dbReference type="InterPro" id="IPR006204">
    <property type="entry name" value="GHMP_kinase_N_dom"/>
</dbReference>
<dbReference type="InterPro" id="IPR004424">
    <property type="entry name" value="IspE"/>
</dbReference>
<dbReference type="InterPro" id="IPR020568">
    <property type="entry name" value="Ribosomal_Su5_D2-typ_SF"/>
</dbReference>
<dbReference type="InterPro" id="IPR014721">
    <property type="entry name" value="Ribsml_uS5_D2-typ_fold_subgr"/>
</dbReference>
<dbReference type="NCBIfam" id="TIGR00154">
    <property type="entry name" value="ispE"/>
    <property type="match status" value="1"/>
</dbReference>
<dbReference type="PANTHER" id="PTHR43527">
    <property type="entry name" value="4-DIPHOSPHOCYTIDYL-2-C-METHYL-D-ERYTHRITOL KINASE, CHLOROPLASTIC"/>
    <property type="match status" value="1"/>
</dbReference>
<dbReference type="PANTHER" id="PTHR43527:SF2">
    <property type="entry name" value="4-DIPHOSPHOCYTIDYL-2-C-METHYL-D-ERYTHRITOL KINASE, CHLOROPLASTIC"/>
    <property type="match status" value="1"/>
</dbReference>
<dbReference type="Pfam" id="PF08544">
    <property type="entry name" value="GHMP_kinases_C"/>
    <property type="match status" value="1"/>
</dbReference>
<dbReference type="Pfam" id="PF00288">
    <property type="entry name" value="GHMP_kinases_N"/>
    <property type="match status" value="1"/>
</dbReference>
<dbReference type="PIRSF" id="PIRSF010376">
    <property type="entry name" value="IspE"/>
    <property type="match status" value="1"/>
</dbReference>
<dbReference type="SUPFAM" id="SSF55060">
    <property type="entry name" value="GHMP Kinase, C-terminal domain"/>
    <property type="match status" value="1"/>
</dbReference>
<dbReference type="SUPFAM" id="SSF54211">
    <property type="entry name" value="Ribosomal protein S5 domain 2-like"/>
    <property type="match status" value="1"/>
</dbReference>
<keyword id="KW-0067">ATP-binding</keyword>
<keyword id="KW-0414">Isoprene biosynthesis</keyword>
<keyword id="KW-0418">Kinase</keyword>
<keyword id="KW-0547">Nucleotide-binding</keyword>
<keyword id="KW-1185">Reference proteome</keyword>
<keyword id="KW-0808">Transferase</keyword>
<evidence type="ECO:0000255" key="1">
    <source>
        <dbReference type="HAMAP-Rule" id="MF_00061"/>
    </source>
</evidence>
<sequence length="310" mass="33122">MTATVRVTAPAKINLHLEVLGQRSDGFHELAMVMQSIDLADQLDCSNRADGLIQLSCDQPGLSCGNDNLVFRAAALLRQRSGFHELGAQIHLRKRIPIGAGLAGGSSDGAAALLALNTLWGLGHTHDHLCAMAAELGSDMPFCLAGGIQLCFGRGECLESVPAAEQSLGVVLVKNPTVSVSTPWAYGECRRLKGDHYLSDEVAFAQRRQDLRAASWLNPLRAAEPPPLRNDLQDVVEPQTASVQMALRLLQDLPGQLRTAMSGSGPSCFALFPNRLDADQALDVARDSFAQAGFDAWSCSFVGHGAKLMP</sequence>
<protein>
    <recommendedName>
        <fullName evidence="1">4-diphosphocytidyl-2-C-methyl-D-erythritol kinase</fullName>
        <shortName evidence="1">CMK</shortName>
        <ecNumber evidence="1">2.7.1.148</ecNumber>
    </recommendedName>
    <alternativeName>
        <fullName evidence="1">4-(cytidine-5'-diphospho)-2-C-methyl-D-erythritol kinase</fullName>
    </alternativeName>
</protein>
<name>ISPE_SYNS3</name>
<organism>
    <name type="scientific">Synechococcus sp. (strain CC9311)</name>
    <dbReference type="NCBI Taxonomy" id="64471"/>
    <lineage>
        <taxon>Bacteria</taxon>
        <taxon>Bacillati</taxon>
        <taxon>Cyanobacteriota</taxon>
        <taxon>Cyanophyceae</taxon>
        <taxon>Synechococcales</taxon>
        <taxon>Synechococcaceae</taxon>
        <taxon>Synechococcus</taxon>
    </lineage>
</organism>
<feature type="chain" id="PRO_0000335762" description="4-diphosphocytidyl-2-C-methyl-D-erythritol kinase">
    <location>
        <begin position="1"/>
        <end position="310"/>
    </location>
</feature>
<feature type="active site" evidence="1">
    <location>
        <position position="12"/>
    </location>
</feature>
<feature type="active site" evidence="1">
    <location>
        <position position="139"/>
    </location>
</feature>
<feature type="binding site" evidence="1">
    <location>
        <begin position="97"/>
        <end position="107"/>
    </location>
    <ligand>
        <name>ATP</name>
        <dbReference type="ChEBI" id="CHEBI:30616"/>
    </ligand>
</feature>
<accession>Q0I9S4</accession>
<gene>
    <name evidence="1" type="primary">ispE</name>
    <name type="ordered locus">sync_1593</name>
</gene>
<proteinExistence type="inferred from homology"/>
<reference key="1">
    <citation type="journal article" date="2006" name="Proc. Natl. Acad. Sci. U.S.A.">
        <title>Genome sequence of Synechococcus CC9311: insights into adaptation to a coastal environment.</title>
        <authorList>
            <person name="Palenik B."/>
            <person name="Ren Q."/>
            <person name="Dupont C.L."/>
            <person name="Myers G.S."/>
            <person name="Heidelberg J.F."/>
            <person name="Badger J.H."/>
            <person name="Madupu R."/>
            <person name="Nelson W.C."/>
            <person name="Brinkac L.M."/>
            <person name="Dodson R.J."/>
            <person name="Durkin A.S."/>
            <person name="Daugherty S.C."/>
            <person name="Sullivan S.A."/>
            <person name="Khouri H."/>
            <person name="Mohamoud Y."/>
            <person name="Halpin R."/>
            <person name="Paulsen I.T."/>
        </authorList>
    </citation>
    <scope>NUCLEOTIDE SEQUENCE [LARGE SCALE GENOMIC DNA]</scope>
    <source>
        <strain>CC9311</strain>
    </source>
</reference>
<comment type="function">
    <text evidence="1">Catalyzes the phosphorylation of the position 2 hydroxy group of 4-diphosphocytidyl-2C-methyl-D-erythritol.</text>
</comment>
<comment type="catalytic activity">
    <reaction evidence="1">
        <text>4-CDP-2-C-methyl-D-erythritol + ATP = 4-CDP-2-C-methyl-D-erythritol 2-phosphate + ADP + H(+)</text>
        <dbReference type="Rhea" id="RHEA:18437"/>
        <dbReference type="ChEBI" id="CHEBI:15378"/>
        <dbReference type="ChEBI" id="CHEBI:30616"/>
        <dbReference type="ChEBI" id="CHEBI:57823"/>
        <dbReference type="ChEBI" id="CHEBI:57919"/>
        <dbReference type="ChEBI" id="CHEBI:456216"/>
        <dbReference type="EC" id="2.7.1.148"/>
    </reaction>
</comment>
<comment type="pathway">
    <text evidence="1">Isoprenoid biosynthesis; isopentenyl diphosphate biosynthesis via DXP pathway; isopentenyl diphosphate from 1-deoxy-D-xylulose 5-phosphate: step 3/6.</text>
</comment>
<comment type="similarity">
    <text evidence="1">Belongs to the GHMP kinase family. IspE subfamily.</text>
</comment>